<feature type="chain" id="PRO_1000052265" description="Large ribosomal subunit protein uL24">
    <location>
        <begin position="1"/>
        <end position="105"/>
    </location>
</feature>
<name>RL24_MYCVP</name>
<evidence type="ECO:0000255" key="1">
    <source>
        <dbReference type="HAMAP-Rule" id="MF_01326"/>
    </source>
</evidence>
<evidence type="ECO:0000305" key="2"/>
<comment type="function">
    <text evidence="1">One of two assembly initiator proteins, it binds directly to the 5'-end of the 23S rRNA, where it nucleates assembly of the 50S subunit.</text>
</comment>
<comment type="function">
    <text evidence="1">One of the proteins that surrounds the polypeptide exit tunnel on the outside of the subunit.</text>
</comment>
<comment type="subunit">
    <text evidence="1">Part of the 50S ribosomal subunit.</text>
</comment>
<comment type="similarity">
    <text evidence="1">Belongs to the universal ribosomal protein uL24 family.</text>
</comment>
<keyword id="KW-0687">Ribonucleoprotein</keyword>
<keyword id="KW-0689">Ribosomal protein</keyword>
<keyword id="KW-0694">RNA-binding</keyword>
<keyword id="KW-0699">rRNA-binding</keyword>
<accession>A1T4R7</accession>
<proteinExistence type="inferred from homology"/>
<organism>
    <name type="scientific">Mycolicibacterium vanbaalenii (strain DSM 7251 / JCM 13017 / BCRC 16820 / KCTC 9966 / NRRL B-24157 / PYR-1)</name>
    <name type="common">Mycobacterium vanbaalenii</name>
    <dbReference type="NCBI Taxonomy" id="350058"/>
    <lineage>
        <taxon>Bacteria</taxon>
        <taxon>Bacillati</taxon>
        <taxon>Actinomycetota</taxon>
        <taxon>Actinomycetes</taxon>
        <taxon>Mycobacteriales</taxon>
        <taxon>Mycobacteriaceae</taxon>
        <taxon>Mycolicibacterium</taxon>
    </lineage>
</organism>
<reference key="1">
    <citation type="submission" date="2006-12" db="EMBL/GenBank/DDBJ databases">
        <title>Complete sequence of Mycobacterium vanbaalenii PYR-1.</title>
        <authorList>
            <consortium name="US DOE Joint Genome Institute"/>
            <person name="Copeland A."/>
            <person name="Lucas S."/>
            <person name="Lapidus A."/>
            <person name="Barry K."/>
            <person name="Detter J.C."/>
            <person name="Glavina del Rio T."/>
            <person name="Hammon N."/>
            <person name="Israni S."/>
            <person name="Dalin E."/>
            <person name="Tice H."/>
            <person name="Pitluck S."/>
            <person name="Singan V."/>
            <person name="Schmutz J."/>
            <person name="Larimer F."/>
            <person name="Land M."/>
            <person name="Hauser L."/>
            <person name="Kyrpides N."/>
            <person name="Anderson I.J."/>
            <person name="Miller C."/>
            <person name="Richardson P."/>
        </authorList>
    </citation>
    <scope>NUCLEOTIDE SEQUENCE [LARGE SCALE GENOMIC DNA]</scope>
    <source>
        <strain>DSM 7251 / JCM 13017 / BCRC 16820 / KCTC 9966 / NRRL B-24157 / PYR-1</strain>
    </source>
</reference>
<dbReference type="EMBL" id="CP000511">
    <property type="protein sequence ID" value="ABM12167.1"/>
    <property type="molecule type" value="Genomic_DNA"/>
</dbReference>
<dbReference type="RefSeq" id="WP_011778597.1">
    <property type="nucleotide sequence ID" value="NC_008726.1"/>
</dbReference>
<dbReference type="SMR" id="A1T4R7"/>
<dbReference type="STRING" id="350058.Mvan_1333"/>
<dbReference type="KEGG" id="mva:Mvan_1333"/>
<dbReference type="eggNOG" id="COG0198">
    <property type="taxonomic scope" value="Bacteria"/>
</dbReference>
<dbReference type="HOGENOM" id="CLU_093315_2_0_11"/>
<dbReference type="Proteomes" id="UP000009159">
    <property type="component" value="Chromosome"/>
</dbReference>
<dbReference type="GO" id="GO:1990904">
    <property type="term" value="C:ribonucleoprotein complex"/>
    <property type="evidence" value="ECO:0007669"/>
    <property type="project" value="UniProtKB-KW"/>
</dbReference>
<dbReference type="GO" id="GO:0005840">
    <property type="term" value="C:ribosome"/>
    <property type="evidence" value="ECO:0007669"/>
    <property type="project" value="UniProtKB-KW"/>
</dbReference>
<dbReference type="GO" id="GO:0019843">
    <property type="term" value="F:rRNA binding"/>
    <property type="evidence" value="ECO:0007669"/>
    <property type="project" value="UniProtKB-UniRule"/>
</dbReference>
<dbReference type="GO" id="GO:0003735">
    <property type="term" value="F:structural constituent of ribosome"/>
    <property type="evidence" value="ECO:0007669"/>
    <property type="project" value="InterPro"/>
</dbReference>
<dbReference type="GO" id="GO:0006412">
    <property type="term" value="P:translation"/>
    <property type="evidence" value="ECO:0007669"/>
    <property type="project" value="UniProtKB-UniRule"/>
</dbReference>
<dbReference type="CDD" id="cd06089">
    <property type="entry name" value="KOW_RPL26"/>
    <property type="match status" value="1"/>
</dbReference>
<dbReference type="FunFam" id="2.30.30.30:FF:000004">
    <property type="entry name" value="50S ribosomal protein L24"/>
    <property type="match status" value="1"/>
</dbReference>
<dbReference type="Gene3D" id="2.30.30.30">
    <property type="match status" value="1"/>
</dbReference>
<dbReference type="HAMAP" id="MF_01326_B">
    <property type="entry name" value="Ribosomal_uL24_B"/>
    <property type="match status" value="1"/>
</dbReference>
<dbReference type="InterPro" id="IPR005824">
    <property type="entry name" value="KOW"/>
</dbReference>
<dbReference type="InterPro" id="IPR014722">
    <property type="entry name" value="Rib_uL2_dom2"/>
</dbReference>
<dbReference type="InterPro" id="IPR003256">
    <property type="entry name" value="Ribosomal_uL24"/>
</dbReference>
<dbReference type="InterPro" id="IPR005825">
    <property type="entry name" value="Ribosomal_uL24_CS"/>
</dbReference>
<dbReference type="InterPro" id="IPR041988">
    <property type="entry name" value="Ribosomal_uL24_KOW"/>
</dbReference>
<dbReference type="InterPro" id="IPR008991">
    <property type="entry name" value="Translation_prot_SH3-like_sf"/>
</dbReference>
<dbReference type="NCBIfam" id="TIGR01079">
    <property type="entry name" value="rplX_bact"/>
    <property type="match status" value="1"/>
</dbReference>
<dbReference type="PANTHER" id="PTHR12903">
    <property type="entry name" value="MITOCHONDRIAL RIBOSOMAL PROTEIN L24"/>
    <property type="match status" value="1"/>
</dbReference>
<dbReference type="Pfam" id="PF00467">
    <property type="entry name" value="KOW"/>
    <property type="match status" value="1"/>
</dbReference>
<dbReference type="Pfam" id="PF17136">
    <property type="entry name" value="ribosomal_L24"/>
    <property type="match status" value="1"/>
</dbReference>
<dbReference type="SMART" id="SM00739">
    <property type="entry name" value="KOW"/>
    <property type="match status" value="1"/>
</dbReference>
<dbReference type="SUPFAM" id="SSF50104">
    <property type="entry name" value="Translation proteins SH3-like domain"/>
    <property type="match status" value="1"/>
</dbReference>
<dbReference type="PROSITE" id="PS01108">
    <property type="entry name" value="RIBOSOMAL_L24"/>
    <property type="match status" value="1"/>
</dbReference>
<protein>
    <recommendedName>
        <fullName evidence="1">Large ribosomal subunit protein uL24</fullName>
    </recommendedName>
    <alternativeName>
        <fullName evidence="2">50S ribosomal protein L24</fullName>
    </alternativeName>
</protein>
<gene>
    <name evidence="1" type="primary">rplX</name>
    <name type="ordered locus">Mvan_1333</name>
</gene>
<sequence length="105" mass="11346">MKVRKGDTVLVISGKDKGAKGKVLVAYPDRNKVLVEGVNRIKKHTPESRTERGASSGGIVTQEAPISVSNVMLLDSDGKPTRVGYRRDDETGKNVRIAKSNGKDI</sequence>